<reference key="1">
    <citation type="submission" date="2009-06" db="EMBL/GenBank/DDBJ databases">
        <title>Complete sequence of chromosome of Geopacillus sp. WCH70.</title>
        <authorList>
            <consortium name="US DOE Joint Genome Institute"/>
            <person name="Lucas S."/>
            <person name="Copeland A."/>
            <person name="Lapidus A."/>
            <person name="Glavina del Rio T."/>
            <person name="Dalin E."/>
            <person name="Tice H."/>
            <person name="Bruce D."/>
            <person name="Goodwin L."/>
            <person name="Pitluck S."/>
            <person name="Chertkov O."/>
            <person name="Brettin T."/>
            <person name="Detter J.C."/>
            <person name="Han C."/>
            <person name="Larimer F."/>
            <person name="Land M."/>
            <person name="Hauser L."/>
            <person name="Kyrpides N."/>
            <person name="Mikhailova N."/>
            <person name="Brumm P."/>
            <person name="Mead D.A."/>
            <person name="Richardson P."/>
        </authorList>
    </citation>
    <scope>NUCLEOTIDE SEQUENCE [LARGE SCALE GENOMIC DNA]</scope>
    <source>
        <strain>WCH70</strain>
    </source>
</reference>
<sequence length="365" mass="41083">MEIKTQLRGLPPYQPGKSIEEVKREYGLTDIIKLASNENPYGCSPAVKEAVMKQLDHLAIYPDGYARLLREKVATHLGVNETQLIFGNGSDEVVQIICRAFLSPNTNTVMAAPTFPQYRHNAVIEGAEIREIPLVDGRHDLEAMLNAIDEQTRVVWICNPNNPTGTYVNEQELTSFLERVPSHVLAVLDEAYYEYATANDYPQTVPLLRQYDNLMILRTFSKAYGLAALRVGYGIASETLIREIEPAREPFNTSSVAQAAAIAALDDQAFIRECVEKNKQGLETFYRFCEENGLRYYPSQANFILIDFGIEGNEVFQYLLERGIIVRSGNALGFPTSVRITVGSKEQNERIIHALTQMLKEKQLI</sequence>
<organism>
    <name type="scientific">Geobacillus sp. (strain WCH70)</name>
    <dbReference type="NCBI Taxonomy" id="471223"/>
    <lineage>
        <taxon>Bacteria</taxon>
        <taxon>Bacillati</taxon>
        <taxon>Bacillota</taxon>
        <taxon>Bacilli</taxon>
        <taxon>Bacillales</taxon>
        <taxon>Anoxybacillaceae</taxon>
        <taxon>Geobacillus</taxon>
    </lineage>
</organism>
<gene>
    <name evidence="1" type="primary">hisC</name>
    <name type="ordered locus">GWCH70_2137</name>
</gene>
<feature type="chain" id="PRO_1000213308" description="Histidinol-phosphate aminotransferase">
    <location>
        <begin position="1"/>
        <end position="365"/>
    </location>
</feature>
<feature type="modified residue" description="N6-(pyridoxal phosphate)lysine" evidence="1">
    <location>
        <position position="222"/>
    </location>
</feature>
<name>HIS8_GEOSW</name>
<comment type="catalytic activity">
    <reaction evidence="1">
        <text>L-histidinol phosphate + 2-oxoglutarate = 3-(imidazol-4-yl)-2-oxopropyl phosphate + L-glutamate</text>
        <dbReference type="Rhea" id="RHEA:23744"/>
        <dbReference type="ChEBI" id="CHEBI:16810"/>
        <dbReference type="ChEBI" id="CHEBI:29985"/>
        <dbReference type="ChEBI" id="CHEBI:57766"/>
        <dbReference type="ChEBI" id="CHEBI:57980"/>
        <dbReference type="EC" id="2.6.1.9"/>
    </reaction>
</comment>
<comment type="cofactor">
    <cofactor evidence="1">
        <name>pyridoxal 5'-phosphate</name>
        <dbReference type="ChEBI" id="CHEBI:597326"/>
    </cofactor>
</comment>
<comment type="pathway">
    <text evidence="1">Amino-acid biosynthesis; L-histidine biosynthesis; L-histidine from 5-phospho-alpha-D-ribose 1-diphosphate: step 7/9.</text>
</comment>
<comment type="subunit">
    <text evidence="1">Homodimer.</text>
</comment>
<comment type="similarity">
    <text evidence="1">Belongs to the class-II pyridoxal-phosphate-dependent aminotransferase family. Histidinol-phosphate aminotransferase subfamily.</text>
</comment>
<keyword id="KW-0028">Amino-acid biosynthesis</keyword>
<keyword id="KW-0032">Aminotransferase</keyword>
<keyword id="KW-0368">Histidine biosynthesis</keyword>
<keyword id="KW-0663">Pyridoxal phosphate</keyword>
<keyword id="KW-0808">Transferase</keyword>
<accession>C5D3D2</accession>
<protein>
    <recommendedName>
        <fullName evidence="1">Histidinol-phosphate aminotransferase</fullName>
        <ecNumber evidence="1">2.6.1.9</ecNumber>
    </recommendedName>
    <alternativeName>
        <fullName evidence="1">Imidazole acetol-phosphate transaminase</fullName>
    </alternativeName>
</protein>
<dbReference type="EC" id="2.6.1.9" evidence="1"/>
<dbReference type="EMBL" id="CP001638">
    <property type="protein sequence ID" value="ACS24847.1"/>
    <property type="molecule type" value="Genomic_DNA"/>
</dbReference>
<dbReference type="SMR" id="C5D3D2"/>
<dbReference type="STRING" id="471223.GWCH70_2137"/>
<dbReference type="KEGG" id="gwc:GWCH70_2137"/>
<dbReference type="eggNOG" id="COG0079">
    <property type="taxonomic scope" value="Bacteria"/>
</dbReference>
<dbReference type="HOGENOM" id="CLU_017584_3_3_9"/>
<dbReference type="OrthoDB" id="9813612at2"/>
<dbReference type="UniPathway" id="UPA00031">
    <property type="reaction ID" value="UER00012"/>
</dbReference>
<dbReference type="GO" id="GO:0004400">
    <property type="term" value="F:histidinol-phosphate transaminase activity"/>
    <property type="evidence" value="ECO:0007669"/>
    <property type="project" value="UniProtKB-UniRule"/>
</dbReference>
<dbReference type="GO" id="GO:0030170">
    <property type="term" value="F:pyridoxal phosphate binding"/>
    <property type="evidence" value="ECO:0007669"/>
    <property type="project" value="InterPro"/>
</dbReference>
<dbReference type="GO" id="GO:0000105">
    <property type="term" value="P:L-histidine biosynthetic process"/>
    <property type="evidence" value="ECO:0007669"/>
    <property type="project" value="UniProtKB-UniRule"/>
</dbReference>
<dbReference type="CDD" id="cd00609">
    <property type="entry name" value="AAT_like"/>
    <property type="match status" value="1"/>
</dbReference>
<dbReference type="Gene3D" id="3.90.1150.10">
    <property type="entry name" value="Aspartate Aminotransferase, domain 1"/>
    <property type="match status" value="1"/>
</dbReference>
<dbReference type="Gene3D" id="3.40.640.10">
    <property type="entry name" value="Type I PLP-dependent aspartate aminotransferase-like (Major domain)"/>
    <property type="match status" value="1"/>
</dbReference>
<dbReference type="HAMAP" id="MF_01023">
    <property type="entry name" value="HisC_aminotrans_2"/>
    <property type="match status" value="1"/>
</dbReference>
<dbReference type="InterPro" id="IPR001917">
    <property type="entry name" value="Aminotrans_II_pyridoxalP_BS"/>
</dbReference>
<dbReference type="InterPro" id="IPR004839">
    <property type="entry name" value="Aminotransferase_I/II_large"/>
</dbReference>
<dbReference type="InterPro" id="IPR005861">
    <property type="entry name" value="HisP_aminotrans"/>
</dbReference>
<dbReference type="InterPro" id="IPR050106">
    <property type="entry name" value="HistidinolP_aminotransfase"/>
</dbReference>
<dbReference type="InterPro" id="IPR015424">
    <property type="entry name" value="PyrdxlP-dep_Trfase"/>
</dbReference>
<dbReference type="InterPro" id="IPR015421">
    <property type="entry name" value="PyrdxlP-dep_Trfase_major"/>
</dbReference>
<dbReference type="InterPro" id="IPR015422">
    <property type="entry name" value="PyrdxlP-dep_Trfase_small"/>
</dbReference>
<dbReference type="NCBIfam" id="TIGR01141">
    <property type="entry name" value="hisC"/>
    <property type="match status" value="1"/>
</dbReference>
<dbReference type="PANTHER" id="PTHR43643:SF3">
    <property type="entry name" value="HISTIDINOL-PHOSPHATE AMINOTRANSFERASE"/>
    <property type="match status" value="1"/>
</dbReference>
<dbReference type="PANTHER" id="PTHR43643">
    <property type="entry name" value="HISTIDINOL-PHOSPHATE AMINOTRANSFERASE 2"/>
    <property type="match status" value="1"/>
</dbReference>
<dbReference type="Pfam" id="PF00155">
    <property type="entry name" value="Aminotran_1_2"/>
    <property type="match status" value="1"/>
</dbReference>
<dbReference type="SUPFAM" id="SSF53383">
    <property type="entry name" value="PLP-dependent transferases"/>
    <property type="match status" value="1"/>
</dbReference>
<dbReference type="PROSITE" id="PS00599">
    <property type="entry name" value="AA_TRANSFER_CLASS_2"/>
    <property type="match status" value="1"/>
</dbReference>
<proteinExistence type="inferred from homology"/>
<evidence type="ECO:0000255" key="1">
    <source>
        <dbReference type="HAMAP-Rule" id="MF_01023"/>
    </source>
</evidence>